<name>DBH1_RHILE</name>
<dbReference type="PIR" id="A02691">
    <property type="entry name" value="DNZRH8"/>
</dbReference>
<dbReference type="SMR" id="P0A3H3"/>
<dbReference type="GO" id="GO:0005829">
    <property type="term" value="C:cytosol"/>
    <property type="evidence" value="ECO:0007669"/>
    <property type="project" value="TreeGrafter"/>
</dbReference>
<dbReference type="GO" id="GO:0003677">
    <property type="term" value="F:DNA binding"/>
    <property type="evidence" value="ECO:0007669"/>
    <property type="project" value="UniProtKB-KW"/>
</dbReference>
<dbReference type="GO" id="GO:0030527">
    <property type="term" value="F:structural constituent of chromatin"/>
    <property type="evidence" value="ECO:0007669"/>
    <property type="project" value="InterPro"/>
</dbReference>
<dbReference type="GO" id="GO:0030261">
    <property type="term" value="P:chromosome condensation"/>
    <property type="evidence" value="ECO:0007669"/>
    <property type="project" value="UniProtKB-KW"/>
</dbReference>
<dbReference type="CDD" id="cd13831">
    <property type="entry name" value="HU"/>
    <property type="match status" value="1"/>
</dbReference>
<dbReference type="Gene3D" id="4.10.520.10">
    <property type="entry name" value="IHF-like DNA-binding proteins"/>
    <property type="match status" value="1"/>
</dbReference>
<dbReference type="InterPro" id="IPR000119">
    <property type="entry name" value="Hist_DNA-bd"/>
</dbReference>
<dbReference type="InterPro" id="IPR020816">
    <property type="entry name" value="Histone-like_DNA-bd_CS"/>
</dbReference>
<dbReference type="InterPro" id="IPR010992">
    <property type="entry name" value="IHF-like_DNA-bd_dom_sf"/>
</dbReference>
<dbReference type="PANTHER" id="PTHR33175">
    <property type="entry name" value="DNA-BINDING PROTEIN HU"/>
    <property type="match status" value="1"/>
</dbReference>
<dbReference type="PANTHER" id="PTHR33175:SF3">
    <property type="entry name" value="DNA-BINDING PROTEIN HU-BETA"/>
    <property type="match status" value="1"/>
</dbReference>
<dbReference type="Pfam" id="PF00216">
    <property type="entry name" value="Bac_DNA_binding"/>
    <property type="match status" value="1"/>
</dbReference>
<dbReference type="PRINTS" id="PR01727">
    <property type="entry name" value="DNABINDINGHU"/>
</dbReference>
<dbReference type="SMART" id="SM00411">
    <property type="entry name" value="BHL"/>
    <property type="match status" value="1"/>
</dbReference>
<dbReference type="SUPFAM" id="SSF47729">
    <property type="entry name" value="IHF-like DNA-binding proteins"/>
    <property type="match status" value="1"/>
</dbReference>
<dbReference type="PROSITE" id="PS00045">
    <property type="entry name" value="HISTONE_LIKE"/>
    <property type="match status" value="1"/>
</dbReference>
<keyword id="KW-0903">Direct protein sequencing</keyword>
<keyword id="KW-0226">DNA condensation</keyword>
<keyword id="KW-0238">DNA-binding</keyword>
<accession>P0A3H3</accession>
<accession>P02347</accession>
<reference key="1">
    <citation type="journal article" date="1985" name="Eur. J. Biochem.">
        <title>Characterization and primary structures of DNA-binding HU-type proteins from Rhizobiaceae.</title>
        <authorList>
            <person name="Khanaka H."/>
            <person name="Laine B."/>
            <person name="Sautiere P."/>
            <person name="Guillaume J."/>
        </authorList>
    </citation>
    <scope>PROTEIN SEQUENCE</scope>
    <source>
        <strain>L18</strain>
    </source>
</reference>
<evidence type="ECO:0000305" key="1"/>
<proteinExistence type="evidence at protein level"/>
<comment type="function">
    <text>Histone-like DNA-binding protein which is capable of wrapping DNA to stabilize it, and thus to prevent its denaturation under extreme environmental conditions.</text>
</comment>
<comment type="similarity">
    <text evidence="1">Belongs to the bacterial histone-like protein family.</text>
</comment>
<protein>
    <recommendedName>
        <fullName>DNA-binding protein HRL18</fullName>
    </recommendedName>
</protein>
<organism>
    <name type="scientific">Rhizobium leguminosarum</name>
    <dbReference type="NCBI Taxonomy" id="384"/>
    <lineage>
        <taxon>Bacteria</taxon>
        <taxon>Pseudomonadati</taxon>
        <taxon>Pseudomonadota</taxon>
        <taxon>Alphaproteobacteria</taxon>
        <taxon>Hyphomicrobiales</taxon>
        <taxon>Rhizobiaceae</taxon>
        <taxon>Rhizobium/Agrobacterium group</taxon>
        <taxon>Rhizobium</taxon>
    </lineage>
</organism>
<feature type="chain" id="PRO_0000104960" description="DNA-binding protein HRL18">
    <location>
        <begin position="1"/>
        <end position="91"/>
    </location>
</feature>
<sequence>MNKNELVSAVAEKAGLTKADAASAVDAVFETVQSELKNGGDIRLAGFGSFSVSRREASKGRNPSTGAEVDIPARNVPKFSAGKGLKDAVNS</sequence>